<organism>
    <name type="scientific">Homo sapiens</name>
    <name type="common">Human</name>
    <dbReference type="NCBI Taxonomy" id="9606"/>
    <lineage>
        <taxon>Eukaryota</taxon>
        <taxon>Metazoa</taxon>
        <taxon>Chordata</taxon>
        <taxon>Craniata</taxon>
        <taxon>Vertebrata</taxon>
        <taxon>Euteleostomi</taxon>
        <taxon>Mammalia</taxon>
        <taxon>Eutheria</taxon>
        <taxon>Euarchontoglires</taxon>
        <taxon>Primates</taxon>
        <taxon>Haplorrhini</taxon>
        <taxon>Catarrhini</taxon>
        <taxon>Hominidae</taxon>
        <taxon>Homo</taxon>
    </lineage>
</organism>
<proteinExistence type="evidence at protein level"/>
<keyword id="KW-0025">Alternative splicing</keyword>
<keyword id="KW-0238">DNA-binding</keyword>
<keyword id="KW-1017">Isopeptide bond</keyword>
<keyword id="KW-0479">Metal-binding</keyword>
<keyword id="KW-0539">Nucleus</keyword>
<keyword id="KW-1267">Proteomics identification</keyword>
<keyword id="KW-1185">Reference proteome</keyword>
<keyword id="KW-0677">Repeat</keyword>
<keyword id="KW-0804">Transcription</keyword>
<keyword id="KW-0805">Transcription regulation</keyword>
<keyword id="KW-0832">Ubl conjugation</keyword>
<keyword id="KW-0862">Zinc</keyword>
<keyword id="KW-0863">Zinc-finger</keyword>
<gene>
    <name type="primary">ZKSCAN7</name>
    <name type="synonym">ZNF167</name>
    <name type="synonym">ZNF448</name>
    <name type="synonym">ZNF64</name>
</gene>
<accession>Q9P0L1</accession>
<accession>A0PJV3</accession>
<accession>A8K5H0</accession>
<accession>Q6WL09</accession>
<accession>Q96FQ2</accession>
<protein>
    <recommendedName>
        <fullName>Zinc finger protein with KRAB and SCAN domains 7</fullName>
    </recommendedName>
    <alternativeName>
        <fullName>Zinc finger protein 167</fullName>
    </alternativeName>
    <alternativeName>
        <fullName>Zinc finger protein 448</fullName>
    </alternativeName>
    <alternativeName>
        <fullName>Zinc finger protein 64</fullName>
    </alternativeName>
</protein>
<feature type="chain" id="PRO_0000047437" description="Zinc finger protein with KRAB and SCAN domains 7">
    <location>
        <begin position="1"/>
        <end position="754"/>
    </location>
</feature>
<feature type="domain" description="SCAN box" evidence="3">
    <location>
        <begin position="54"/>
        <end position="136"/>
    </location>
</feature>
<feature type="domain" description="KRAB" evidence="2">
    <location>
        <begin position="231"/>
        <end position="306"/>
    </location>
</feature>
<feature type="zinc finger region" description="C2H2-type 1" evidence="1">
    <location>
        <begin position="383"/>
        <end position="405"/>
    </location>
</feature>
<feature type="zinc finger region" description="C2H2-type 2" evidence="1">
    <location>
        <begin position="411"/>
        <end position="433"/>
    </location>
</feature>
<feature type="zinc finger region" description="C2H2-type 3" evidence="1">
    <location>
        <begin position="439"/>
        <end position="461"/>
    </location>
</feature>
<feature type="zinc finger region" description="C2H2-type 4" evidence="1">
    <location>
        <begin position="467"/>
        <end position="489"/>
    </location>
</feature>
<feature type="zinc finger region" description="C2H2-type 5" evidence="1">
    <location>
        <begin position="495"/>
        <end position="517"/>
    </location>
</feature>
<feature type="zinc finger region" description="C2H2-type 6" evidence="1">
    <location>
        <begin position="523"/>
        <end position="545"/>
    </location>
</feature>
<feature type="zinc finger region" description="C2H2-type 7" evidence="1">
    <location>
        <begin position="551"/>
        <end position="573"/>
    </location>
</feature>
<feature type="zinc finger region" description="C2H2-type 8" evidence="1">
    <location>
        <begin position="579"/>
        <end position="601"/>
    </location>
</feature>
<feature type="zinc finger region" description="C2H2-type 9" evidence="1">
    <location>
        <begin position="607"/>
        <end position="629"/>
    </location>
</feature>
<feature type="zinc finger region" description="C2H2-type 10" evidence="1">
    <location>
        <begin position="635"/>
        <end position="657"/>
    </location>
</feature>
<feature type="zinc finger region" description="C2H2-type 11; degenerate" evidence="1">
    <location>
        <begin position="663"/>
        <end position="685"/>
    </location>
</feature>
<feature type="zinc finger region" description="C2H2-type 12" evidence="1">
    <location>
        <begin position="691"/>
        <end position="713"/>
    </location>
</feature>
<feature type="zinc finger region" description="C2H2-type 13" evidence="1">
    <location>
        <begin position="719"/>
        <end position="741"/>
    </location>
</feature>
<feature type="region of interest" description="Disordered" evidence="4">
    <location>
        <begin position="157"/>
        <end position="215"/>
    </location>
</feature>
<feature type="region of interest" description="Disordered" evidence="4">
    <location>
        <begin position="735"/>
        <end position="754"/>
    </location>
</feature>
<feature type="compositionally biased region" description="Polar residues" evidence="4">
    <location>
        <begin position="158"/>
        <end position="172"/>
    </location>
</feature>
<feature type="compositionally biased region" description="Polar residues" evidence="4">
    <location>
        <begin position="199"/>
        <end position="215"/>
    </location>
</feature>
<feature type="cross-link" description="Glycyl lysine isopeptide (Lys-Gly) (interchain with G-Cter in SUMO2)" evidence="9">
    <location>
        <position position="28"/>
    </location>
</feature>
<feature type="splice variant" id="VSP_011955" description="In isoform 2." evidence="7">
    <original>AGENMM</original>
    <variation>GWSTMA</variation>
    <location>
        <begin position="271"/>
        <end position="276"/>
    </location>
</feature>
<feature type="splice variant" id="VSP_011956" description="In isoform 2." evidence="7">
    <location>
        <begin position="277"/>
        <end position="754"/>
    </location>
</feature>
<feature type="sequence variant" id="VAR_052782" description="In dbSNP:rs35696191.">
    <original>R</original>
    <variation>C</variation>
    <location>
        <position position="24"/>
    </location>
</feature>
<feature type="sequence variant" id="VAR_052783" description="In dbSNP:rs13081859.">
    <original>F</original>
    <variation>S</variation>
    <location>
        <position position="153"/>
    </location>
</feature>
<feature type="sequence variant" id="VAR_052784" description="In dbSNP:rs34396823.">
    <original>T</original>
    <variation>I</variation>
    <location>
        <position position="342"/>
    </location>
</feature>
<feature type="sequence variant" id="VAR_052785" description="In dbSNP:rs34181686.">
    <original>E</original>
    <variation>K</variation>
    <location>
        <position position="359"/>
    </location>
</feature>
<feature type="sequence variant" id="VAR_052786" description="In dbSNP:rs9835485.">
    <original>T</original>
    <variation>A</variation>
    <location>
        <position position="432"/>
    </location>
</feature>
<feature type="sequence variant" id="VAR_052787" description="In dbSNP:rs9873604." evidence="5 6">
    <original>T</original>
    <variation>I</variation>
    <location>
        <position position="483"/>
    </location>
</feature>
<feature type="sequence variant" id="VAR_052788" description="In dbSNP:rs34437520.">
    <original>S</original>
    <variation>F</variation>
    <location>
        <position position="746"/>
    </location>
</feature>
<feature type="sequence conflict" description="In Ref. 1; AAF72104." evidence="8" ref="1">
    <original>C</original>
    <variation>Y</variation>
    <location>
        <position position="665"/>
    </location>
</feature>
<dbReference type="EMBL" id="AF154846">
    <property type="protein sequence ID" value="AAF72104.1"/>
    <property type="molecule type" value="mRNA"/>
</dbReference>
<dbReference type="EMBL" id="AY280798">
    <property type="protein sequence ID" value="AAQ16302.1"/>
    <property type="molecule type" value="mRNA"/>
</dbReference>
<dbReference type="EMBL" id="AK291285">
    <property type="protein sequence ID" value="BAF83974.1"/>
    <property type="molecule type" value="mRNA"/>
</dbReference>
<dbReference type="EMBL" id="BC010555">
    <property type="protein sequence ID" value="AAH10555.1"/>
    <property type="molecule type" value="mRNA"/>
</dbReference>
<dbReference type="EMBL" id="BC063020">
    <property type="protein sequence ID" value="AAH63020.1"/>
    <property type="molecule type" value="mRNA"/>
</dbReference>
<dbReference type="EMBL" id="BC127640">
    <property type="protein sequence ID" value="AAI27641.1"/>
    <property type="molecule type" value="mRNA"/>
</dbReference>
<dbReference type="CCDS" id="CCDS2714.1">
    <molecule id="Q9P0L1-2"/>
</dbReference>
<dbReference type="CCDS" id="CCDS2715.1">
    <molecule id="Q9P0L1-1"/>
</dbReference>
<dbReference type="PIR" id="G45193">
    <property type="entry name" value="G45193"/>
</dbReference>
<dbReference type="RefSeq" id="NP_001275519.1">
    <molecule id="Q9P0L1-1"/>
    <property type="nucleotide sequence ID" value="NM_001288590.2"/>
</dbReference>
<dbReference type="RefSeq" id="NP_001275520.1">
    <molecule id="Q9P0L1-2"/>
    <property type="nucleotide sequence ID" value="NM_001288591.2"/>
</dbReference>
<dbReference type="RefSeq" id="NP_001275521.1">
    <property type="nucleotide sequence ID" value="NM_001288592.1"/>
</dbReference>
<dbReference type="RefSeq" id="NP_061121.2">
    <molecule id="Q9P0L1-1"/>
    <property type="nucleotide sequence ID" value="NM_018651.3"/>
</dbReference>
<dbReference type="RefSeq" id="NP_079445.1">
    <molecule id="Q9P0L1-2"/>
    <property type="nucleotide sequence ID" value="NM_025169.3"/>
</dbReference>
<dbReference type="SMR" id="Q9P0L1"/>
<dbReference type="BioGRID" id="120978">
    <property type="interactions" value="18"/>
</dbReference>
<dbReference type="FunCoup" id="Q9P0L1">
    <property type="interactions" value="48"/>
</dbReference>
<dbReference type="IntAct" id="Q9P0L1">
    <property type="interactions" value="17"/>
</dbReference>
<dbReference type="STRING" id="9606.ENSP00000273320"/>
<dbReference type="iPTMnet" id="Q9P0L1"/>
<dbReference type="PhosphoSitePlus" id="Q9P0L1"/>
<dbReference type="BioMuta" id="ZKSCAN7"/>
<dbReference type="DMDM" id="124078992"/>
<dbReference type="jPOST" id="Q9P0L1"/>
<dbReference type="MassIVE" id="Q9P0L1"/>
<dbReference type="PaxDb" id="9606-ENSP00000273320"/>
<dbReference type="PeptideAtlas" id="Q9P0L1"/>
<dbReference type="ProteomicsDB" id="83569">
    <molecule id="Q9P0L1-1"/>
</dbReference>
<dbReference type="Pumba" id="Q9P0L1"/>
<dbReference type="Antibodypedia" id="12496">
    <property type="antibodies" value="84 antibodies from 20 providers"/>
</dbReference>
<dbReference type="DNASU" id="55888"/>
<dbReference type="Ensembl" id="ENST00000273320.7">
    <molecule id="Q9P0L1-1"/>
    <property type="protein sequence ID" value="ENSP00000273320.3"/>
    <property type="gene ID" value="ENSG00000196345.13"/>
</dbReference>
<dbReference type="Ensembl" id="ENST00000341840.7">
    <molecule id="Q9P0L1-2"/>
    <property type="protein sequence ID" value="ENSP00000345404.3"/>
    <property type="gene ID" value="ENSG00000196345.13"/>
</dbReference>
<dbReference type="Ensembl" id="ENST00000426540.6">
    <molecule id="Q9P0L1-1"/>
    <property type="protein sequence ID" value="ENSP00000395524.1"/>
    <property type="gene ID" value="ENSG00000196345.13"/>
</dbReference>
<dbReference type="Ensembl" id="ENST00000431636.5">
    <molecule id="Q9P0L1-2"/>
    <property type="protein sequence ID" value="ENSP00000416681.1"/>
    <property type="gene ID" value="ENSG00000196345.13"/>
</dbReference>
<dbReference type="Ensembl" id="ENST00000625422.2">
    <molecule id="Q9P0L1-2"/>
    <property type="protein sequence ID" value="ENSP00000486331.1"/>
    <property type="gene ID" value="ENSG00000281894.3"/>
</dbReference>
<dbReference type="Ensembl" id="ENST00000626497.2">
    <molecule id="Q9P0L1-1"/>
    <property type="protein sequence ID" value="ENSP00000485942.1"/>
    <property type="gene ID" value="ENSG00000281894.3"/>
</dbReference>
<dbReference type="Ensembl" id="ENST00000629379.3">
    <molecule id="Q9P0L1-1"/>
    <property type="protein sequence ID" value="ENSP00000485948.1"/>
    <property type="gene ID" value="ENSG00000281894.3"/>
</dbReference>
<dbReference type="Ensembl" id="ENST00000629459.2">
    <molecule id="Q9P0L1-2"/>
    <property type="protein sequence ID" value="ENSP00000486642.1"/>
    <property type="gene ID" value="ENSG00000281894.3"/>
</dbReference>
<dbReference type="GeneID" id="55888"/>
<dbReference type="KEGG" id="hsa:55888"/>
<dbReference type="MANE-Select" id="ENST00000426540.6">
    <property type="protein sequence ID" value="ENSP00000395524.1"/>
    <property type="RefSeq nucleotide sequence ID" value="NM_001288590.2"/>
    <property type="RefSeq protein sequence ID" value="NP_001275519.1"/>
</dbReference>
<dbReference type="UCSC" id="uc003cni.5">
    <molecule id="Q9P0L1-1"/>
    <property type="organism name" value="human"/>
</dbReference>
<dbReference type="AGR" id="HGNC:12955"/>
<dbReference type="CTD" id="55888"/>
<dbReference type="DisGeNET" id="55888"/>
<dbReference type="GeneCards" id="ZKSCAN7"/>
<dbReference type="HGNC" id="HGNC:12955">
    <property type="gene designation" value="ZKSCAN7"/>
</dbReference>
<dbReference type="HPA" id="ENSG00000196345">
    <property type="expression patterns" value="Low tissue specificity"/>
</dbReference>
<dbReference type="neXtProt" id="NX_Q9P0L1"/>
<dbReference type="OpenTargets" id="ENSG00000196345"/>
<dbReference type="PharmGKB" id="PA37537"/>
<dbReference type="VEuPathDB" id="HostDB:ENSG00000196345"/>
<dbReference type="eggNOG" id="KOG1721">
    <property type="taxonomic scope" value="Eukaryota"/>
</dbReference>
<dbReference type="GeneTree" id="ENSGT00940000162985"/>
<dbReference type="HOGENOM" id="CLU_002678_49_8_1"/>
<dbReference type="InParanoid" id="Q9P0L1"/>
<dbReference type="OMA" id="GHSGQCA"/>
<dbReference type="OrthoDB" id="9411774at2759"/>
<dbReference type="PAN-GO" id="Q9P0L1">
    <property type="GO annotations" value="4 GO annotations based on evolutionary models"/>
</dbReference>
<dbReference type="PhylomeDB" id="Q9P0L1"/>
<dbReference type="TreeFam" id="TF350837"/>
<dbReference type="PathwayCommons" id="Q9P0L1"/>
<dbReference type="Reactome" id="R-HSA-212436">
    <property type="pathway name" value="Generic Transcription Pathway"/>
</dbReference>
<dbReference type="SignaLink" id="Q9P0L1"/>
<dbReference type="BioGRID-ORCS" id="55888">
    <property type="hits" value="9 hits in 1165 CRISPR screens"/>
</dbReference>
<dbReference type="ChiTaRS" id="ZKSCAN7">
    <property type="organism name" value="human"/>
</dbReference>
<dbReference type="GenomeRNAi" id="55888"/>
<dbReference type="Pharos" id="Q9P0L1">
    <property type="development level" value="Tbio"/>
</dbReference>
<dbReference type="PRO" id="PR:Q9P0L1"/>
<dbReference type="Proteomes" id="UP000005640">
    <property type="component" value="Chromosome 3"/>
</dbReference>
<dbReference type="RNAct" id="Q9P0L1">
    <property type="molecule type" value="protein"/>
</dbReference>
<dbReference type="Bgee" id="ENSG00000196345">
    <property type="expression patterns" value="Expressed in primordial germ cell in gonad and 102 other cell types or tissues"/>
</dbReference>
<dbReference type="ExpressionAtlas" id="Q9P0L1">
    <property type="expression patterns" value="baseline and differential"/>
</dbReference>
<dbReference type="GO" id="GO:0005634">
    <property type="term" value="C:nucleus"/>
    <property type="evidence" value="ECO:0000318"/>
    <property type="project" value="GO_Central"/>
</dbReference>
<dbReference type="GO" id="GO:0000981">
    <property type="term" value="F:DNA-binding transcription factor activity, RNA polymerase II-specific"/>
    <property type="evidence" value="ECO:0000318"/>
    <property type="project" value="GO_Central"/>
</dbReference>
<dbReference type="GO" id="GO:0000978">
    <property type="term" value="F:RNA polymerase II cis-regulatory region sequence-specific DNA binding"/>
    <property type="evidence" value="ECO:0000318"/>
    <property type="project" value="GO_Central"/>
</dbReference>
<dbReference type="GO" id="GO:0008270">
    <property type="term" value="F:zinc ion binding"/>
    <property type="evidence" value="ECO:0007669"/>
    <property type="project" value="UniProtKB-KW"/>
</dbReference>
<dbReference type="GO" id="GO:0006357">
    <property type="term" value="P:regulation of transcription by RNA polymerase II"/>
    <property type="evidence" value="ECO:0000318"/>
    <property type="project" value="GO_Central"/>
</dbReference>
<dbReference type="CDD" id="cd07765">
    <property type="entry name" value="KRAB_A-box"/>
    <property type="match status" value="1"/>
</dbReference>
<dbReference type="CDD" id="cd07936">
    <property type="entry name" value="SCAN"/>
    <property type="match status" value="1"/>
</dbReference>
<dbReference type="FunFam" id="3.30.160.60:FF:000002">
    <property type="entry name" value="Zinc finger protein 1 homolog"/>
    <property type="match status" value="1"/>
</dbReference>
<dbReference type="FunFam" id="3.30.160.60:FF:000824">
    <property type="entry name" value="Zinc finger protein 184"/>
    <property type="match status" value="1"/>
</dbReference>
<dbReference type="FunFam" id="3.30.160.60:FF:000295">
    <property type="entry name" value="zinc finger protein 19"/>
    <property type="match status" value="1"/>
</dbReference>
<dbReference type="FunFam" id="3.30.160.60:FF:000512">
    <property type="entry name" value="zinc finger protein 197 isoform X1"/>
    <property type="match status" value="1"/>
</dbReference>
<dbReference type="FunFam" id="1.10.4020.10:FF:000001">
    <property type="entry name" value="zinc finger protein 263 isoform X1"/>
    <property type="match status" value="1"/>
</dbReference>
<dbReference type="FunFam" id="3.30.160.60:FF:002343">
    <property type="entry name" value="Zinc finger protein 33A"/>
    <property type="match status" value="2"/>
</dbReference>
<dbReference type="FunFam" id="3.30.160.60:FF:000016">
    <property type="entry name" value="zinc finger protein 37 homolog"/>
    <property type="match status" value="1"/>
</dbReference>
<dbReference type="FunFam" id="3.30.160.60:FF:001882">
    <property type="entry name" value="Zinc finger protein 473"/>
    <property type="match status" value="1"/>
</dbReference>
<dbReference type="FunFam" id="3.30.160.60:FF:000737">
    <property type="entry name" value="Zinc finger protein 565"/>
    <property type="match status" value="1"/>
</dbReference>
<dbReference type="FunFam" id="3.30.160.60:FF:000459">
    <property type="entry name" value="Zinc finger with KRAB and SCAN domains 1"/>
    <property type="match status" value="2"/>
</dbReference>
<dbReference type="FunFam" id="3.30.160.60:FF:000427">
    <property type="entry name" value="Zinc finger with KRAB and SCAN domains 7"/>
    <property type="match status" value="1"/>
</dbReference>
<dbReference type="FunFam" id="3.30.160.60:FF:000537">
    <property type="entry name" value="Zinc finger with KRAB and SCAN domains 7"/>
    <property type="match status" value="1"/>
</dbReference>
<dbReference type="Gene3D" id="6.10.140.140">
    <property type="match status" value="1"/>
</dbReference>
<dbReference type="Gene3D" id="3.30.160.60">
    <property type="entry name" value="Classic Zinc Finger"/>
    <property type="match status" value="13"/>
</dbReference>
<dbReference type="Gene3D" id="1.10.4020.10">
    <property type="entry name" value="DNA breaking-rejoining enzymes"/>
    <property type="match status" value="1"/>
</dbReference>
<dbReference type="InterPro" id="IPR001909">
    <property type="entry name" value="KRAB"/>
</dbReference>
<dbReference type="InterPro" id="IPR036051">
    <property type="entry name" value="KRAB_dom_sf"/>
</dbReference>
<dbReference type="InterPro" id="IPR003309">
    <property type="entry name" value="SCAN_dom"/>
</dbReference>
<dbReference type="InterPro" id="IPR038269">
    <property type="entry name" value="SCAN_sf"/>
</dbReference>
<dbReference type="InterPro" id="IPR036236">
    <property type="entry name" value="Znf_C2H2_sf"/>
</dbReference>
<dbReference type="InterPro" id="IPR013087">
    <property type="entry name" value="Znf_C2H2_type"/>
</dbReference>
<dbReference type="PANTHER" id="PTHR24399:SF75">
    <property type="entry name" value="ZFP14 ZINC FINGER PROTEIN-RELATED"/>
    <property type="match status" value="1"/>
</dbReference>
<dbReference type="PANTHER" id="PTHR24399">
    <property type="entry name" value="ZINC FINGER AND BTB DOMAIN-CONTAINING"/>
    <property type="match status" value="1"/>
</dbReference>
<dbReference type="Pfam" id="PF01352">
    <property type="entry name" value="KRAB"/>
    <property type="match status" value="1"/>
</dbReference>
<dbReference type="Pfam" id="PF02023">
    <property type="entry name" value="SCAN"/>
    <property type="match status" value="1"/>
</dbReference>
<dbReference type="Pfam" id="PF00096">
    <property type="entry name" value="zf-C2H2"/>
    <property type="match status" value="13"/>
</dbReference>
<dbReference type="SMART" id="SM00349">
    <property type="entry name" value="KRAB"/>
    <property type="match status" value="1"/>
</dbReference>
<dbReference type="SMART" id="SM00431">
    <property type="entry name" value="SCAN"/>
    <property type="match status" value="1"/>
</dbReference>
<dbReference type="SMART" id="SM00355">
    <property type="entry name" value="ZnF_C2H2"/>
    <property type="match status" value="13"/>
</dbReference>
<dbReference type="SUPFAM" id="SSF57667">
    <property type="entry name" value="beta-beta-alpha zinc fingers"/>
    <property type="match status" value="7"/>
</dbReference>
<dbReference type="SUPFAM" id="SSF109640">
    <property type="entry name" value="KRAB domain (Kruppel-associated box)"/>
    <property type="match status" value="1"/>
</dbReference>
<dbReference type="SUPFAM" id="SSF47353">
    <property type="entry name" value="Retrovirus capsid dimerization domain-like"/>
    <property type="match status" value="1"/>
</dbReference>
<dbReference type="PROSITE" id="PS50805">
    <property type="entry name" value="KRAB"/>
    <property type="match status" value="1"/>
</dbReference>
<dbReference type="PROSITE" id="PS50804">
    <property type="entry name" value="SCAN_BOX"/>
    <property type="match status" value="1"/>
</dbReference>
<dbReference type="PROSITE" id="PS00028">
    <property type="entry name" value="ZINC_FINGER_C2H2_1"/>
    <property type="match status" value="13"/>
</dbReference>
<dbReference type="PROSITE" id="PS50157">
    <property type="entry name" value="ZINC_FINGER_C2H2_2"/>
    <property type="match status" value="13"/>
</dbReference>
<reference key="1">
    <citation type="submission" date="1999-05" db="EMBL/GenBank/DDBJ databases">
        <title>Cloning and isolating human ZFP cDNA.</title>
        <authorList>
            <person name="Zhou H.J."/>
            <person name="Huang X.W."/>
            <person name="Zhou Y."/>
            <person name="Hu S.L."/>
            <person name="Yuan J.G."/>
            <person name="Qiang B.Q."/>
        </authorList>
    </citation>
    <scope>NUCLEOTIDE SEQUENCE [MRNA] (ISOFORM 1)</scope>
    <scope>VARIANT ILE-483</scope>
</reference>
<reference key="2">
    <citation type="submission" date="2003-04" db="EMBL/GenBank/DDBJ databases">
        <title>Cloning and characterization of a human novel znf gene.</title>
        <authorList>
            <person name="Luo K.T."/>
            <person name="Yu L."/>
        </authorList>
    </citation>
    <scope>NUCLEOTIDE SEQUENCE [MRNA] (ISOFORM 1)</scope>
</reference>
<reference key="3">
    <citation type="journal article" date="2004" name="Nat. Genet.">
        <title>Complete sequencing and characterization of 21,243 full-length human cDNAs.</title>
        <authorList>
            <person name="Ota T."/>
            <person name="Suzuki Y."/>
            <person name="Nishikawa T."/>
            <person name="Otsuki T."/>
            <person name="Sugiyama T."/>
            <person name="Irie R."/>
            <person name="Wakamatsu A."/>
            <person name="Hayashi K."/>
            <person name="Sato H."/>
            <person name="Nagai K."/>
            <person name="Kimura K."/>
            <person name="Makita H."/>
            <person name="Sekine M."/>
            <person name="Obayashi M."/>
            <person name="Nishi T."/>
            <person name="Shibahara T."/>
            <person name="Tanaka T."/>
            <person name="Ishii S."/>
            <person name="Yamamoto J."/>
            <person name="Saito K."/>
            <person name="Kawai Y."/>
            <person name="Isono Y."/>
            <person name="Nakamura Y."/>
            <person name="Nagahari K."/>
            <person name="Murakami K."/>
            <person name="Yasuda T."/>
            <person name="Iwayanagi T."/>
            <person name="Wagatsuma M."/>
            <person name="Shiratori A."/>
            <person name="Sudo H."/>
            <person name="Hosoiri T."/>
            <person name="Kaku Y."/>
            <person name="Kodaira H."/>
            <person name="Kondo H."/>
            <person name="Sugawara M."/>
            <person name="Takahashi M."/>
            <person name="Kanda K."/>
            <person name="Yokoi T."/>
            <person name="Furuya T."/>
            <person name="Kikkawa E."/>
            <person name="Omura Y."/>
            <person name="Abe K."/>
            <person name="Kamihara K."/>
            <person name="Katsuta N."/>
            <person name="Sato K."/>
            <person name="Tanikawa M."/>
            <person name="Yamazaki M."/>
            <person name="Ninomiya K."/>
            <person name="Ishibashi T."/>
            <person name="Yamashita H."/>
            <person name="Murakawa K."/>
            <person name="Fujimori K."/>
            <person name="Tanai H."/>
            <person name="Kimata M."/>
            <person name="Watanabe M."/>
            <person name="Hiraoka S."/>
            <person name="Chiba Y."/>
            <person name="Ishida S."/>
            <person name="Ono Y."/>
            <person name="Takiguchi S."/>
            <person name="Watanabe S."/>
            <person name="Yosida M."/>
            <person name="Hotuta T."/>
            <person name="Kusano J."/>
            <person name="Kanehori K."/>
            <person name="Takahashi-Fujii A."/>
            <person name="Hara H."/>
            <person name="Tanase T.-O."/>
            <person name="Nomura Y."/>
            <person name="Togiya S."/>
            <person name="Komai F."/>
            <person name="Hara R."/>
            <person name="Takeuchi K."/>
            <person name="Arita M."/>
            <person name="Imose N."/>
            <person name="Musashino K."/>
            <person name="Yuuki H."/>
            <person name="Oshima A."/>
            <person name="Sasaki N."/>
            <person name="Aotsuka S."/>
            <person name="Yoshikawa Y."/>
            <person name="Matsunawa H."/>
            <person name="Ichihara T."/>
            <person name="Shiohata N."/>
            <person name="Sano S."/>
            <person name="Moriya S."/>
            <person name="Momiyama H."/>
            <person name="Satoh N."/>
            <person name="Takami S."/>
            <person name="Terashima Y."/>
            <person name="Suzuki O."/>
            <person name="Nakagawa S."/>
            <person name="Senoh A."/>
            <person name="Mizoguchi H."/>
            <person name="Goto Y."/>
            <person name="Shimizu F."/>
            <person name="Wakebe H."/>
            <person name="Hishigaki H."/>
            <person name="Watanabe T."/>
            <person name="Sugiyama A."/>
            <person name="Takemoto M."/>
            <person name="Kawakami B."/>
            <person name="Yamazaki M."/>
            <person name="Watanabe K."/>
            <person name="Kumagai A."/>
            <person name="Itakura S."/>
            <person name="Fukuzumi Y."/>
            <person name="Fujimori Y."/>
            <person name="Komiyama M."/>
            <person name="Tashiro H."/>
            <person name="Tanigami A."/>
            <person name="Fujiwara T."/>
            <person name="Ono T."/>
            <person name="Yamada K."/>
            <person name="Fujii Y."/>
            <person name="Ozaki K."/>
            <person name="Hirao M."/>
            <person name="Ohmori Y."/>
            <person name="Kawabata A."/>
            <person name="Hikiji T."/>
            <person name="Kobatake N."/>
            <person name="Inagaki H."/>
            <person name="Ikema Y."/>
            <person name="Okamoto S."/>
            <person name="Okitani R."/>
            <person name="Kawakami T."/>
            <person name="Noguchi S."/>
            <person name="Itoh T."/>
            <person name="Shigeta K."/>
            <person name="Senba T."/>
            <person name="Matsumura K."/>
            <person name="Nakajima Y."/>
            <person name="Mizuno T."/>
            <person name="Morinaga M."/>
            <person name="Sasaki M."/>
            <person name="Togashi T."/>
            <person name="Oyama M."/>
            <person name="Hata H."/>
            <person name="Watanabe M."/>
            <person name="Komatsu T."/>
            <person name="Mizushima-Sugano J."/>
            <person name="Satoh T."/>
            <person name="Shirai Y."/>
            <person name="Takahashi Y."/>
            <person name="Nakagawa K."/>
            <person name="Okumura K."/>
            <person name="Nagase T."/>
            <person name="Nomura N."/>
            <person name="Kikuchi H."/>
            <person name="Masuho Y."/>
            <person name="Yamashita R."/>
            <person name="Nakai K."/>
            <person name="Yada T."/>
            <person name="Nakamura Y."/>
            <person name="Ohara O."/>
            <person name="Isogai T."/>
            <person name="Sugano S."/>
        </authorList>
    </citation>
    <scope>NUCLEOTIDE SEQUENCE [LARGE SCALE MRNA] (ISOFORM 1)</scope>
    <scope>VARIANT ILE-483</scope>
    <source>
        <tissue>Teratocarcinoma</tissue>
    </source>
</reference>
<reference key="4">
    <citation type="journal article" date="2004" name="Genome Res.">
        <title>The status, quality, and expansion of the NIH full-length cDNA project: the Mammalian Gene Collection (MGC).</title>
        <authorList>
            <consortium name="The MGC Project Team"/>
        </authorList>
    </citation>
    <scope>NUCLEOTIDE SEQUENCE [LARGE SCALE MRNA] (ISOFORM 2)</scope>
    <source>
        <tissue>Brain</tissue>
    </source>
</reference>
<reference key="5">
    <citation type="journal article" date="2017" name="Nat. Struct. Mol. Biol.">
        <title>Site-specific mapping of the human SUMO proteome reveals co-modification with phosphorylation.</title>
        <authorList>
            <person name="Hendriks I.A."/>
            <person name="Lyon D."/>
            <person name="Young C."/>
            <person name="Jensen L.J."/>
            <person name="Vertegaal A.C."/>
            <person name="Nielsen M.L."/>
        </authorList>
    </citation>
    <scope>SUMOYLATION [LARGE SCALE ANALYSIS] AT LYS-28</scope>
    <scope>IDENTIFICATION BY MASS SPECTROMETRY [LARGE SCALE ANALYSIS]</scope>
</reference>
<comment type="function">
    <text>May be involved in transcriptional regulation.</text>
</comment>
<comment type="interaction">
    <interactant intactId="EBI-743851">
        <id>Q9P0L1</id>
    </interactant>
    <interactant intactId="EBI-745846">
        <id>P57086</id>
        <label>SCAND1</label>
    </interactant>
    <organismsDiffer>false</organismsDiffer>
    <experiments>4</experiments>
</comment>
<comment type="interaction">
    <interactant intactId="EBI-743851">
        <id>Q9P0L1</id>
    </interactant>
    <interactant intactId="EBI-2818641">
        <id>Q969J2</id>
        <label>ZKSCAN4</label>
    </interactant>
    <organismsDiffer>false</organismsDiffer>
    <experiments>4</experiments>
</comment>
<comment type="interaction">
    <interactant intactId="EBI-743851">
        <id>Q9P0L1</id>
    </interactant>
    <interactant intactId="EBI-740232">
        <id>Q9NWS9-2</id>
        <label>ZNF446</label>
    </interactant>
    <organismsDiffer>false</organismsDiffer>
    <experiments>3</experiments>
</comment>
<comment type="interaction">
    <interactant intactId="EBI-743851">
        <id>Q9P0L1</id>
    </interactant>
    <interactant intactId="EBI-1210440">
        <id>O43309</id>
        <label>ZSCAN12</label>
    </interactant>
    <organismsDiffer>false</organismsDiffer>
    <experiments>3</experiments>
</comment>
<comment type="interaction">
    <interactant intactId="EBI-743851">
        <id>Q9P0L1</id>
    </interactant>
    <interactant intactId="EBI-10281938">
        <id>Q9Y5A6</id>
        <label>ZSCAN21</label>
    </interactant>
    <organismsDiffer>false</organismsDiffer>
    <experiments>3</experiments>
</comment>
<comment type="interaction">
    <interactant intactId="EBI-10698225">
        <id>Q9P0L1-2</id>
    </interactant>
    <interactant intactId="EBI-10290053">
        <id>Q96JS3</id>
        <label>PGBD1</label>
    </interactant>
    <organismsDiffer>false</organismsDiffer>
    <experiments>3</experiments>
</comment>
<comment type="interaction">
    <interactant intactId="EBI-10698225">
        <id>Q9P0L1-2</id>
    </interactant>
    <interactant intactId="EBI-745846">
        <id>P57086</id>
        <label>SCAND1</label>
    </interactant>
    <organismsDiffer>false</organismsDiffer>
    <experiments>6</experiments>
</comment>
<comment type="interaction">
    <interactant intactId="EBI-10698225">
        <id>Q9P0L1-2</id>
    </interactant>
    <interactant intactId="EBI-11955057">
        <id>Q8N8B7-2</id>
        <label>TCEANC</label>
    </interactant>
    <organismsDiffer>false</organismsDiffer>
    <experiments>3</experiments>
</comment>
<comment type="interaction">
    <interactant intactId="EBI-10698225">
        <id>Q9P0L1-2</id>
    </interactant>
    <interactant intactId="EBI-16431094">
        <id>A0A0S2Z6X0</id>
        <label>ZKSCAN4</label>
    </interactant>
    <organismsDiffer>false</organismsDiffer>
    <experiments>3</experiments>
</comment>
<comment type="interaction">
    <interactant intactId="EBI-10698225">
        <id>Q9P0L1-2</id>
    </interactant>
    <interactant intactId="EBI-2818641">
        <id>Q969J2</id>
        <label>ZKSCAN4</label>
    </interactant>
    <organismsDiffer>false</organismsDiffer>
    <experiments>6</experiments>
</comment>
<comment type="interaction">
    <interactant intactId="EBI-10698225">
        <id>Q9P0L1-2</id>
    </interactant>
    <interactant intactId="EBI-10281938">
        <id>Q9Y5A6</id>
        <label>ZSCAN21</label>
    </interactant>
    <organismsDiffer>false</organismsDiffer>
    <experiments>3</experiments>
</comment>
<comment type="interaction">
    <interactant intactId="EBI-10698225">
        <id>Q9P0L1-2</id>
    </interactant>
    <interactant intactId="EBI-10178224">
        <id>P10073</id>
        <label>ZSCAN22</label>
    </interactant>
    <organismsDiffer>false</organismsDiffer>
    <experiments>3</experiments>
</comment>
<comment type="interaction">
    <interactant intactId="EBI-10698225">
        <id>Q9P0L1-2</id>
    </interactant>
    <interactant intactId="EBI-5667532">
        <id>Q3MJ62</id>
        <label>ZSCAN23</label>
    </interactant>
    <organismsDiffer>false</organismsDiffer>
    <experiments>3</experiments>
</comment>
<comment type="subcellular location">
    <subcellularLocation>
        <location evidence="3">Nucleus</location>
    </subcellularLocation>
</comment>
<comment type="alternative products">
    <event type="alternative splicing"/>
    <isoform>
        <id>Q9P0L1-1</id>
        <name>1</name>
        <sequence type="displayed"/>
    </isoform>
    <isoform>
        <id>Q9P0L1-2</id>
        <name>2</name>
        <sequence type="described" ref="VSP_011955 VSP_011956"/>
    </isoform>
</comment>
<comment type="similarity">
    <text evidence="8">Belongs to the krueppel C2H2-type zinc-finger protein family.</text>
</comment>
<name>ZKSC7_HUMAN</name>
<sequence>MTTAGRGNLGLIPRSTAFQKQEGRLTVKQEPANQTWGQGSSLQKNYPPVCEIFRLHFRQLCYHEMSGPQEALSRLRELCRWWLMPEVHTKEQILELLVLEQFLSILPGELRTWVQLHHPESGEEAVAVVEDFQRHLSGSEEVSAPAQKQEMHFEETTALGTTKESPPTSPLSGGSAPGAHLEPPYDPGTHHLPSGDFAQCTSPVPTLPQVGNSGDQAGATVLRMVRPQDTVAYEDLSVDYTQKKWKSLTLSQRALQWNMMPENHHSMASLAGENMMKGSELTPKQEFFKGSESSNRTSGGLFGVVPGAAETGDVCEDTFKELEGQTSDEEGSRLENDFLEITDEDKKKSTKDRYDKYKEVGEHPPLSSSPVEHEGVLKGQKSYRCDECGKAFNRSSHLIGHQRIHTGEKPYECNECGKTFRQTSQLIVHLRTHTGEKPYECSECGKAYRHSSHLIQHQRLHNGEKPYKCNECAKAFTQSSRLTDHQRTHTGEKPYECNECGEAFIRSKSLARHQVLHTGKKPYKCNECGRAFCSNRNLIDHQRIHTGEKPYECSECGKAFSRSKCLIRHQSLHTGEKPYKCSECGKAFNQNSQLIEHERIHTGEKPFECSECGKAFGLSKCLIRHQRLHTGEKPYKCNECGKSFNQNSHLIIHQRIHTGEKPYECNECGKVFSYSSSLMVHQRTHTGEKPYKCNDCGKAFSDSSQLIVHQRVHTGEKPYECSECGKAFSQRSTFNHHQRTHTGEKSSGLAWSVS</sequence>
<evidence type="ECO:0000255" key="1">
    <source>
        <dbReference type="PROSITE-ProRule" id="PRU00042"/>
    </source>
</evidence>
<evidence type="ECO:0000255" key="2">
    <source>
        <dbReference type="PROSITE-ProRule" id="PRU00119"/>
    </source>
</evidence>
<evidence type="ECO:0000255" key="3">
    <source>
        <dbReference type="PROSITE-ProRule" id="PRU00187"/>
    </source>
</evidence>
<evidence type="ECO:0000256" key="4">
    <source>
        <dbReference type="SAM" id="MobiDB-lite"/>
    </source>
</evidence>
<evidence type="ECO:0000269" key="5">
    <source>
    </source>
</evidence>
<evidence type="ECO:0000269" key="6">
    <source ref="1"/>
</evidence>
<evidence type="ECO:0000303" key="7">
    <source>
    </source>
</evidence>
<evidence type="ECO:0000305" key="8"/>
<evidence type="ECO:0007744" key="9">
    <source>
    </source>
</evidence>